<organism>
    <name type="scientific">Geobacillus stearothermophilus</name>
    <name type="common">Bacillus stearothermophilus</name>
    <dbReference type="NCBI Taxonomy" id="1422"/>
    <lineage>
        <taxon>Bacteria</taxon>
        <taxon>Bacillati</taxon>
        <taxon>Bacillota</taxon>
        <taxon>Bacilli</taxon>
        <taxon>Bacillales</taxon>
        <taxon>Anoxybacillaceae</taxon>
        <taxon>Geobacillus</taxon>
    </lineage>
</organism>
<gene>
    <name evidence="3" type="primary">bsoBIM</name>
</gene>
<name>MTB1_GEOSE</name>
<comment type="function">
    <text evidence="2 5">An alpha subtype methylase that recognizes the double-stranded sequence 5'-CYCGRG-3', methylates C-1 on both strands, and protects the DNA from cleavage by the BsoBI endonuclease.</text>
</comment>
<comment type="catalytic activity">
    <reaction evidence="1">
        <text>a 2'-deoxycytidine in DNA + S-adenosyl-L-methionine = an N(4)-methyl-2'-deoxycytidine in DNA + S-adenosyl-L-homocysteine + H(+)</text>
        <dbReference type="Rhea" id="RHEA:16857"/>
        <dbReference type="Rhea" id="RHEA-COMP:11369"/>
        <dbReference type="Rhea" id="RHEA-COMP:13674"/>
        <dbReference type="ChEBI" id="CHEBI:15378"/>
        <dbReference type="ChEBI" id="CHEBI:57856"/>
        <dbReference type="ChEBI" id="CHEBI:59789"/>
        <dbReference type="ChEBI" id="CHEBI:85452"/>
        <dbReference type="ChEBI" id="CHEBI:137933"/>
        <dbReference type="EC" id="2.1.1.113"/>
    </reaction>
</comment>
<comment type="similarity">
    <text evidence="4">Belongs to the N(4)/N(6)-methyltransferase family. N(4) subfamily.</text>
</comment>
<sequence length="509" mass="59144">METVQMSLDLQPEDTKANIECSSPDYEIKCFSHNQFAPQIERLKIEKKYIHIVEETETFNRKLVSYQANKNQSIHNWIRYKEGFSSELVQNLIEEFGLSKGDTILDPFLGSGTTSLTAKMLGINSIGIDILPISHIAFEPKSFIFEYNLEELDRAYKEIYEISPTKIEQKFNHLSITEGAFPEETENDLLFFTHWDNNSQYSYQTKTLIKLILVSILEEISYTRKDGQYLRWDYRSQKVIETNKKRLEQGKEPIKTILDKGELPTVKESLLNTLLTIKEDIKEIQQKCLPNESVHELIKDSALNALPKINDNTFDAVITSPPYCNRYDYTRTYALELAYLGVDEKKIRELRQAQLSCTVENKSKLKQLKDYYHSLFLESRYAEIERLVTGNEVLNEINYALRKRWENGEVNNKGILSMVDGYFTELTFIFYELFRTCKPGAKVAFVNDNVRYAGEIIPVDFLSTKIAEDIGFKPIKIYTLKQRKGNSSQQMGKYGRVALRKSITIWEKP</sequence>
<keyword id="KW-0238">DNA-binding</keyword>
<keyword id="KW-0489">Methyltransferase</keyword>
<keyword id="KW-0680">Restriction system</keyword>
<keyword id="KW-0949">S-adenosyl-L-methionine</keyword>
<keyword id="KW-0808">Transferase</keyword>
<evidence type="ECO:0000250" key="1">
    <source>
        <dbReference type="UniProtKB" id="Q04845"/>
    </source>
</evidence>
<evidence type="ECO:0000303" key="2">
    <source>
    </source>
</evidence>
<evidence type="ECO:0000303" key="3">
    <source>
    </source>
</evidence>
<evidence type="ECO:0000305" key="4"/>
<evidence type="ECO:0000305" key="5">
    <source>
    </source>
</evidence>
<protein>
    <recommendedName>
        <fullName evidence="2">Type II methyltransferase M.BsoBI</fullName>
        <shortName evidence="2">M.BsoBI</shortName>
        <ecNumber evidence="1">2.1.1.113</ecNumber>
    </recommendedName>
    <alternativeName>
        <fullName>Modification methylase BsoBI</fullName>
    </alternativeName>
    <alternativeName>
        <fullName>N(4)- cytosine-specific methyltransferase BsoBI</fullName>
    </alternativeName>
</protein>
<accession>P70986</accession>
<proteinExistence type="inferred from homology"/>
<reference key="1">
    <citation type="journal article" date="1996" name="Mol. Gen. Genet.">
        <title>Cloning and sequence comparison of AvaI and BsoBI restriction-modification systems.</title>
        <authorList>
            <person name="Ruan H."/>
            <person name="Lunnen K.D."/>
            <person name="Scott M.E."/>
            <person name="Moran L.S."/>
            <person name="Slatko B.E."/>
            <person name="Pelletier J.J."/>
            <person name="Hess E.J."/>
            <person name="Benner J. II"/>
            <person name="Wilson G.G."/>
            <person name="Xu S.-Y."/>
        </authorList>
    </citation>
    <scope>NUCLEOTIDE SEQUENCE [GENOMIC DNA]</scope>
    <source>
        <strain>JN209</strain>
    </source>
</reference>
<reference key="2">
    <citation type="journal article" date="2003" name="Nucleic Acids Res.">
        <title>A nomenclature for restriction enzymes, DNA methyltransferases, homing endonucleases and their genes.</title>
        <authorList>
            <person name="Roberts R.J."/>
            <person name="Belfort M."/>
            <person name="Bestor T."/>
            <person name="Bhagwat A.S."/>
            <person name="Bickle T.A."/>
            <person name="Bitinaite J."/>
            <person name="Blumenthal R.M."/>
            <person name="Degtyarev S.K."/>
            <person name="Dryden D.T."/>
            <person name="Dybvig K."/>
            <person name="Firman K."/>
            <person name="Gromova E.S."/>
            <person name="Gumport R.I."/>
            <person name="Halford S.E."/>
            <person name="Hattman S."/>
            <person name="Heitman J."/>
            <person name="Hornby D.P."/>
            <person name="Janulaitis A."/>
            <person name="Jeltsch A."/>
            <person name="Josephsen J."/>
            <person name="Kiss A."/>
            <person name="Klaenhammer T.R."/>
            <person name="Kobayashi I."/>
            <person name="Kong H."/>
            <person name="Krueger D.H."/>
            <person name="Lacks S."/>
            <person name="Marinus M.G."/>
            <person name="Miyahara M."/>
            <person name="Morgan R.D."/>
            <person name="Murray N.E."/>
            <person name="Nagaraja V."/>
            <person name="Piekarowicz A."/>
            <person name="Pingoud A."/>
            <person name="Raleigh E."/>
            <person name="Rao D.N."/>
            <person name="Reich N."/>
            <person name="Repin V.E."/>
            <person name="Selker E.U."/>
            <person name="Shaw P.C."/>
            <person name="Stein D.C."/>
            <person name="Stoddard B.L."/>
            <person name="Szybalski W."/>
            <person name="Trautner T.A."/>
            <person name="Van Etten J.L."/>
            <person name="Vitor J.M."/>
            <person name="Wilson G.G."/>
            <person name="Xu S.Y."/>
        </authorList>
    </citation>
    <scope>NOMENCLATURE</scope>
    <scope>SUBTYPE</scope>
</reference>
<dbReference type="EC" id="2.1.1.113" evidence="1"/>
<dbReference type="EMBL" id="X98287">
    <property type="protein sequence ID" value="CAA66933.1"/>
    <property type="molecule type" value="Genomic_DNA"/>
</dbReference>
<dbReference type="SMR" id="P70986"/>
<dbReference type="REBASE" id="3311">
    <property type="entry name" value="M.BsoBI"/>
</dbReference>
<dbReference type="BRENDA" id="2.1.1.113">
    <property type="organism ID" value="623"/>
</dbReference>
<dbReference type="PRO" id="PR:P70986"/>
<dbReference type="GO" id="GO:0003677">
    <property type="term" value="F:DNA binding"/>
    <property type="evidence" value="ECO:0007669"/>
    <property type="project" value="UniProtKB-KW"/>
</dbReference>
<dbReference type="GO" id="GO:0008170">
    <property type="term" value="F:N-methyltransferase activity"/>
    <property type="evidence" value="ECO:0007669"/>
    <property type="project" value="InterPro"/>
</dbReference>
<dbReference type="GO" id="GO:0015667">
    <property type="term" value="F:site-specific DNA-methyltransferase (cytosine-N4-specific) activity"/>
    <property type="evidence" value="ECO:0007669"/>
    <property type="project" value="UniProtKB-EC"/>
</dbReference>
<dbReference type="GO" id="GO:0009307">
    <property type="term" value="P:DNA restriction-modification system"/>
    <property type="evidence" value="ECO:0007669"/>
    <property type="project" value="UniProtKB-KW"/>
</dbReference>
<dbReference type="GO" id="GO:0032259">
    <property type="term" value="P:methylation"/>
    <property type="evidence" value="ECO:0007669"/>
    <property type="project" value="UniProtKB-KW"/>
</dbReference>
<dbReference type="Gene3D" id="3.40.50.150">
    <property type="entry name" value="Vaccinia Virus protein VP39"/>
    <property type="match status" value="2"/>
</dbReference>
<dbReference type="InterPro" id="IPR002941">
    <property type="entry name" value="DNA_methylase_N4/N6"/>
</dbReference>
<dbReference type="InterPro" id="IPR017985">
    <property type="entry name" value="MeTrfase_CN4_CS"/>
</dbReference>
<dbReference type="InterPro" id="IPR029063">
    <property type="entry name" value="SAM-dependent_MTases_sf"/>
</dbReference>
<dbReference type="Pfam" id="PF01555">
    <property type="entry name" value="N6_N4_Mtase"/>
    <property type="match status" value="2"/>
</dbReference>
<dbReference type="SUPFAM" id="SSF53335">
    <property type="entry name" value="S-adenosyl-L-methionine-dependent methyltransferases"/>
    <property type="match status" value="2"/>
</dbReference>
<dbReference type="PROSITE" id="PS00093">
    <property type="entry name" value="N4_MTASE"/>
    <property type="match status" value="1"/>
</dbReference>
<feature type="chain" id="PRO_0000087925" description="Type II methyltransferase M.BsoBI">
    <location>
        <begin position="1"/>
        <end position="509"/>
    </location>
</feature>